<gene>
    <name evidence="2" type="primary">eca</name>
    <name type="ORF">GK12749</name>
</gene>
<comment type="function">
    <text evidence="1">Eca and bai are essential, though not redundant, for dorsoventral patterning of the embryo. Specifically required during early embryogenesis for the activity of maternal tkv, while the zygotic tkv is not affected. Involved in Golgi organization (By similarity).</text>
</comment>
<comment type="subcellular location">
    <subcellularLocation>
        <location evidence="3">Endoplasmic reticulum membrane</location>
        <topology evidence="3">Single-pass type I membrane protein</topology>
    </subcellularLocation>
</comment>
<comment type="similarity">
    <text evidence="3">Belongs to the EMP24/GP25L family.</text>
</comment>
<protein>
    <recommendedName>
        <fullName evidence="2">Transmembrane emp24 domain-containing protein eca</fullName>
    </recommendedName>
</protein>
<accession>B4NKL0</accession>
<feature type="signal peptide" evidence="3">
    <location>
        <begin position="1"/>
        <end position="20"/>
    </location>
</feature>
<feature type="chain" id="PRO_0000393934" description="Transmembrane emp24 domain-containing protein eca" evidence="3">
    <location>
        <begin position="21"/>
        <end position="216"/>
    </location>
</feature>
<feature type="topological domain" description="Lumenal" evidence="3">
    <location>
        <begin position="21"/>
        <end position="183"/>
    </location>
</feature>
<feature type="transmembrane region" description="Helical" evidence="3">
    <location>
        <begin position="184"/>
        <end position="203"/>
    </location>
</feature>
<feature type="topological domain" description="Cytoplasmic" evidence="3">
    <location>
        <begin position="204"/>
        <end position="216"/>
    </location>
</feature>
<feature type="domain" description="GOLD" evidence="4">
    <location>
        <begin position="30"/>
        <end position="126"/>
    </location>
</feature>
<feature type="coiled-coil region" evidence="3">
    <location>
        <begin position="134"/>
        <end position="164"/>
    </location>
</feature>
<feature type="short sequence motif" description="Prevents secretion from ER" evidence="3">
    <location>
        <begin position="213"/>
        <end position="216"/>
    </location>
</feature>
<dbReference type="EMBL" id="CH964272">
    <property type="protein sequence ID" value="EDW85182.1"/>
    <property type="molecule type" value="Genomic_DNA"/>
</dbReference>
<dbReference type="SMR" id="B4NKL0"/>
<dbReference type="STRING" id="7260.B4NKL0"/>
<dbReference type="EnsemblMetazoa" id="FBtr0243400">
    <property type="protein sequence ID" value="FBpp0241892"/>
    <property type="gene ID" value="FBgn0214758"/>
</dbReference>
<dbReference type="EnsemblMetazoa" id="XM_002074160.4">
    <property type="protein sequence ID" value="XP_002074196.1"/>
    <property type="gene ID" value="LOC6651051"/>
</dbReference>
<dbReference type="GeneID" id="6651051"/>
<dbReference type="KEGG" id="dwi:6651051"/>
<dbReference type="CTD" id="41177"/>
<dbReference type="eggNOG" id="KOG1690">
    <property type="taxonomic scope" value="Eukaryota"/>
</dbReference>
<dbReference type="HOGENOM" id="CLU_066963_2_2_1"/>
<dbReference type="OMA" id="GATCAWQ"/>
<dbReference type="OrthoDB" id="3427at2759"/>
<dbReference type="PhylomeDB" id="B4NKL0"/>
<dbReference type="Proteomes" id="UP000007798">
    <property type="component" value="Unassembled WGS sequence"/>
</dbReference>
<dbReference type="GO" id="GO:0005789">
    <property type="term" value="C:endoplasmic reticulum membrane"/>
    <property type="evidence" value="ECO:0007669"/>
    <property type="project" value="UniProtKB-SubCell"/>
</dbReference>
<dbReference type="GO" id="GO:0009953">
    <property type="term" value="P:dorsal/ventral pattern formation"/>
    <property type="evidence" value="ECO:0000250"/>
    <property type="project" value="UniProtKB"/>
</dbReference>
<dbReference type="InterPro" id="IPR015720">
    <property type="entry name" value="Emp24-like"/>
</dbReference>
<dbReference type="InterPro" id="IPR009038">
    <property type="entry name" value="GOLD_dom"/>
</dbReference>
<dbReference type="PANTHER" id="PTHR22811">
    <property type="entry name" value="TRANSMEMBRANE EMP24 DOMAIN-CONTAINING PROTEIN"/>
    <property type="match status" value="1"/>
</dbReference>
<dbReference type="Pfam" id="PF01105">
    <property type="entry name" value="EMP24_GP25L"/>
    <property type="match status" value="1"/>
</dbReference>
<dbReference type="SMART" id="SM01190">
    <property type="entry name" value="EMP24_GP25L"/>
    <property type="match status" value="1"/>
</dbReference>
<dbReference type="PROSITE" id="PS50866">
    <property type="entry name" value="GOLD"/>
    <property type="match status" value="1"/>
</dbReference>
<organism>
    <name type="scientific">Drosophila willistoni</name>
    <name type="common">Fruit fly</name>
    <dbReference type="NCBI Taxonomy" id="7260"/>
    <lineage>
        <taxon>Eukaryota</taxon>
        <taxon>Metazoa</taxon>
        <taxon>Ecdysozoa</taxon>
        <taxon>Arthropoda</taxon>
        <taxon>Hexapoda</taxon>
        <taxon>Insecta</taxon>
        <taxon>Pterygota</taxon>
        <taxon>Neoptera</taxon>
        <taxon>Endopterygota</taxon>
        <taxon>Diptera</taxon>
        <taxon>Brachycera</taxon>
        <taxon>Muscomorpha</taxon>
        <taxon>Ephydroidea</taxon>
        <taxon>Drosophilidae</taxon>
        <taxon>Drosophila</taxon>
        <taxon>Sophophora</taxon>
    </lineage>
</organism>
<keyword id="KW-0175">Coiled coil</keyword>
<keyword id="KW-0217">Developmental protein</keyword>
<keyword id="KW-0256">Endoplasmic reticulum</keyword>
<keyword id="KW-0472">Membrane</keyword>
<keyword id="KW-1185">Reference proteome</keyword>
<keyword id="KW-0732">Signal</keyword>
<keyword id="KW-0812">Transmembrane</keyword>
<keyword id="KW-1133">Transmembrane helix</keyword>
<reference evidence="5" key="1">
    <citation type="journal article" date="2007" name="Nature">
        <title>Evolution of genes and genomes on the Drosophila phylogeny.</title>
        <authorList>
            <consortium name="Drosophila 12 genomes consortium"/>
        </authorList>
    </citation>
    <scope>NUCLEOTIDE SEQUENCE [LARGE SCALE GENOMIC DNA]</scope>
    <source>
        <strain evidence="5">Tucson 14030-0811.24</strain>
    </source>
</reference>
<evidence type="ECO:0000250" key="1"/>
<evidence type="ECO:0000250" key="2">
    <source>
        <dbReference type="UniProtKB" id="Q8SXY6"/>
    </source>
</evidence>
<evidence type="ECO:0000255" key="3"/>
<evidence type="ECO:0000255" key="4">
    <source>
        <dbReference type="PROSITE-ProRule" id="PRU00096"/>
    </source>
</evidence>
<evidence type="ECO:0000312" key="5">
    <source>
        <dbReference type="EMBL" id="EDW85182.1"/>
    </source>
</evidence>
<name>TMEDE_DROWI</name>
<proteinExistence type="inferred from homology"/>
<sequence>MRNQFICVALLLCALNSACGLYFHISETERKCFIEEVPDETTVIVNYKVELYDPRSNGFMPSSPGIGMHVEVRDSDDKVILSRVYSSQGRISFTSHTPGEHVICMYSNSTAWFSGAQLRVHLDIQVGEHAIDYANVAQKEKLTELQLRIRQLLDQVDQITKEQNYQRYREERFRHTSESTNSRVLWWSLAQTVVLVCMGFWQMRHLKSFFEAKKLV</sequence>